<keyword id="KW-0010">Activator</keyword>
<keyword id="KW-0963">Cytoplasm</keyword>
<keyword id="KW-0903">Direct protein sequencing</keyword>
<keyword id="KW-0238">DNA-binding</keyword>
<keyword id="KW-0614">Plasmid</keyword>
<keyword id="KW-1185">Reference proteome</keyword>
<keyword id="KW-0804">Transcription</keyword>
<keyword id="KW-0805">Transcription regulation</keyword>
<keyword id="KW-0843">Virulence</keyword>
<reference key="1">
    <citation type="journal article" date="1989" name="Nucleic Acids Res.">
        <title>Nucleotide sequence of a plasmid gene involved in the virulence of salmonellas.</title>
        <authorList>
            <person name="Pullinger G.D."/>
            <person name="Baird G.D."/>
            <person name="Williamson C.M."/>
            <person name="Lax A.J."/>
        </authorList>
    </citation>
    <scope>NUCLEOTIDE SEQUENCE [GENOMIC DNA]</scope>
    <source>
        <strain>1275 wild-type</strain>
        <plasmid>pEX102</plasmid>
    </source>
</reference>
<reference key="2">
    <citation type="journal article" date="1989" name="FEBS Lett.">
        <title>Molecular organization of genes constituting the virulence determinant on the Salmonella typhimurium 96 kilobase pair plasmid.</title>
        <authorList>
            <person name="Taira S."/>
            <person name="Rhen M."/>
        </authorList>
    </citation>
    <scope>NUCLEOTIDE SEQUENCE [GENOMIC DNA]</scope>
    <source>
        <plasmid>pEX102</plasmid>
    </source>
</reference>
<reference key="3">
    <citation type="journal article" date="1991" name="J. Bacteriol.">
        <title>The Salmonella typhimurium virulence plasmid encodes a positive regulator of a plasmid-encoded virulence gene.</title>
        <authorList>
            <person name="Caldweel A.L."/>
            <person name="Gulig P.A."/>
        </authorList>
    </citation>
    <scope>NUCLEOTIDE SEQUENCE [GENOMIC DNA]</scope>
    <source>
        <strain>SR-11</strain>
        <plasmid>pStSR100</plasmid>
    </source>
</reference>
<reference key="4">
    <citation type="journal article" date="1989" name="Res. Microbiol.">
        <title>A plasmid-borne virulence region (2.8 kb) from Salmonella typhimurium contains two open reading frames.</title>
        <authorList>
            <person name="Norel F."/>
            <person name="Pisano M.-R."/>
            <person name="Nicoli J."/>
            <person name="Popoff M.Y."/>
        </authorList>
    </citation>
    <scope>NUCLEOTIDE SEQUENCE [GENOMIC DNA]</scope>
    <source>
        <strain>C5</strain>
        <plasmid>pIP1350</plasmid>
    </source>
</reference>
<reference key="5">
    <citation type="journal article" date="2001" name="Nature">
        <title>Complete genome sequence of Salmonella enterica serovar Typhimurium LT2.</title>
        <authorList>
            <person name="McClelland M."/>
            <person name="Sanderson K.E."/>
            <person name="Spieth J."/>
            <person name="Clifton S.W."/>
            <person name="Latreille P."/>
            <person name="Courtney L."/>
            <person name="Porwollik S."/>
            <person name="Ali J."/>
            <person name="Dante M."/>
            <person name="Du F."/>
            <person name="Hou S."/>
            <person name="Layman D."/>
            <person name="Leonard S."/>
            <person name="Nguyen C."/>
            <person name="Scott K."/>
            <person name="Holmes A."/>
            <person name="Grewal N."/>
            <person name="Mulvaney E."/>
            <person name="Ryan E."/>
            <person name="Sun H."/>
            <person name="Florea L."/>
            <person name="Miller W."/>
            <person name="Stoneking T."/>
            <person name="Nhan M."/>
            <person name="Waterston R."/>
            <person name="Wilson R.K."/>
        </authorList>
    </citation>
    <scope>NUCLEOTIDE SEQUENCE [LARGE SCALE GENOMIC DNA]</scope>
    <source>
        <strain>LT2 / SGSC1412 / ATCC 700720</strain>
        <plasmid>pSLT</plasmid>
    </source>
</reference>
<reference key="6">
    <citation type="journal article" date="1991" name="FEMS Microbiol. Lett.">
        <title>Amino-terminal sequence analysis of four plasmid-encoded virulence-associated proteins of Salmonella typhimurium.</title>
        <authorList>
            <person name="Taira S."/>
            <person name="Baumann M."/>
            <person name="Riikonen P."/>
            <person name="Sukupolvi S."/>
            <person name="Rhen M."/>
        </authorList>
    </citation>
    <scope>PROTEIN SEQUENCE OF 1-10</scope>
    <source>
        <plasmid>pEX102</plasmid>
    </source>
</reference>
<reference key="7">
    <citation type="journal article" date="2009" name="PLoS Pathog.">
        <title>Coordinated regulation of virulence during systemic infection of Salmonella enterica serovar Typhimurium.</title>
        <authorList>
            <person name="Yoon H."/>
            <person name="McDermott J.E."/>
            <person name="Porwollik S."/>
            <person name="McClelland M."/>
            <person name="Heffron F."/>
        </authorList>
    </citation>
    <scope>DISRUPTION PHENOTYPE</scope>
    <source>
        <strain evidence="3">14028s / SGSC 2262</strain>
    </source>
</reference>
<feature type="chain" id="PRO_0000105680" description="Virulence genes transcriptional activator">
    <location>
        <begin position="1"/>
        <end position="297"/>
    </location>
</feature>
<feature type="domain" description="HTH lysR-type" evidence="1">
    <location>
        <begin position="1"/>
        <end position="61"/>
    </location>
</feature>
<feature type="DNA-binding region" description="H-T-H motif" evidence="1">
    <location>
        <begin position="21"/>
        <end position="40"/>
    </location>
</feature>
<evidence type="ECO:0000255" key="1">
    <source>
        <dbReference type="PROSITE-ProRule" id="PRU00253"/>
    </source>
</evidence>
<evidence type="ECO:0000269" key="2">
    <source>
    </source>
</evidence>
<evidence type="ECO:0000303" key="3">
    <source>
    </source>
</evidence>
<evidence type="ECO:0000305" key="4"/>
<organism>
    <name type="scientific">Salmonella typhimurium (strain LT2 / SGSC1412 / ATCC 700720)</name>
    <dbReference type="NCBI Taxonomy" id="99287"/>
    <lineage>
        <taxon>Bacteria</taxon>
        <taxon>Pseudomonadati</taxon>
        <taxon>Pseudomonadota</taxon>
        <taxon>Gammaproteobacteria</taxon>
        <taxon>Enterobacterales</taxon>
        <taxon>Enterobacteriaceae</taxon>
        <taxon>Salmonella</taxon>
    </lineage>
</organism>
<protein>
    <recommendedName>
        <fullName>Virulence genes transcriptional activator</fullName>
    </recommendedName>
</protein>
<accession>P13041</accession>
<geneLocation type="plasmid">
    <name>pEX102</name>
</geneLocation>
<geneLocation type="plasmid">
    <name>pStSR100</name>
</geneLocation>
<geneLocation type="plasmid">
    <name>pIP1350</name>
</geneLocation>
<geneLocation type="plasmid">
    <name>pSLT</name>
</geneLocation>
<dbReference type="EMBL" id="X16111">
    <property type="protein sequence ID" value="CAA34244.1"/>
    <property type="molecule type" value="Genomic_DNA"/>
</dbReference>
<dbReference type="EMBL" id="X57092">
    <property type="protein sequence ID" value="CAA40371.1"/>
    <property type="molecule type" value="Genomic_DNA"/>
</dbReference>
<dbReference type="EMBL" id="AE006471">
    <property type="protein sequence ID" value="AAL23532.1"/>
    <property type="molecule type" value="Genomic_DNA"/>
</dbReference>
<dbReference type="PIR" id="S06670">
    <property type="entry name" value="S06670"/>
</dbReference>
<dbReference type="RefSeq" id="NP_490531.1">
    <property type="nucleotide sequence ID" value="NC_003277.2"/>
</dbReference>
<dbReference type="RefSeq" id="WP_000346691.1">
    <property type="nucleotide sequence ID" value="NC_003277.2"/>
</dbReference>
<dbReference type="RefSeq" id="YP_003264394.1">
    <property type="nucleotide sequence ID" value="NC_013437.1"/>
</dbReference>
<dbReference type="RefSeq" id="YP_003864191.1">
    <property type="nucleotide sequence ID" value="NC_014476.2"/>
</dbReference>
<dbReference type="RefSeq" id="YP_006955263.1">
    <property type="nucleotide sequence ID" value="NC_019108.1"/>
</dbReference>
<dbReference type="RefSeq" id="YP_006955403.1">
    <property type="nucleotide sequence ID" value="NC_019109.1"/>
</dbReference>
<dbReference type="RefSeq" id="YP_006955579.1">
    <property type="nucleotide sequence ID" value="NC_019001.1"/>
</dbReference>
<dbReference type="SMR" id="P13041"/>
<dbReference type="GeneID" id="1256197"/>
<dbReference type="KEGG" id="stm:PSLT041"/>
<dbReference type="PATRIC" id="fig|99287.12.peg.4894"/>
<dbReference type="HOGENOM" id="CLU_936543_0_0_6"/>
<dbReference type="OMA" id="VISARHY"/>
<dbReference type="PhylomeDB" id="P13041"/>
<dbReference type="BioCyc" id="SENT99287:PSLT041-MONOMER"/>
<dbReference type="PHI-base" id="PHI:2671"/>
<dbReference type="PHI-base" id="PHI:662"/>
<dbReference type="Proteomes" id="UP000001014">
    <property type="component" value="Plasmid pSLT"/>
</dbReference>
<dbReference type="GO" id="GO:0005737">
    <property type="term" value="C:cytoplasm"/>
    <property type="evidence" value="ECO:0007669"/>
    <property type="project" value="UniProtKB-SubCell"/>
</dbReference>
<dbReference type="GO" id="GO:0003677">
    <property type="term" value="F:DNA binding"/>
    <property type="evidence" value="ECO:0007669"/>
    <property type="project" value="UniProtKB-KW"/>
</dbReference>
<dbReference type="GO" id="GO:0003700">
    <property type="term" value="F:DNA-binding transcription factor activity"/>
    <property type="evidence" value="ECO:0000318"/>
    <property type="project" value="GO_Central"/>
</dbReference>
<dbReference type="GO" id="GO:0006355">
    <property type="term" value="P:regulation of DNA-templated transcription"/>
    <property type="evidence" value="ECO:0000318"/>
    <property type="project" value="GO_Central"/>
</dbReference>
<dbReference type="CDD" id="cd05466">
    <property type="entry name" value="PBP2_LTTR_substrate"/>
    <property type="match status" value="1"/>
</dbReference>
<dbReference type="Gene3D" id="1.10.10.10">
    <property type="entry name" value="Winged helix-like DNA-binding domain superfamily/Winged helix DNA-binding domain"/>
    <property type="match status" value="1"/>
</dbReference>
<dbReference type="InterPro" id="IPR050176">
    <property type="entry name" value="LTTR"/>
</dbReference>
<dbReference type="InterPro" id="IPR000847">
    <property type="entry name" value="Tscrpt_reg_HTH_LysR"/>
</dbReference>
<dbReference type="InterPro" id="IPR036388">
    <property type="entry name" value="WH-like_DNA-bd_sf"/>
</dbReference>
<dbReference type="InterPro" id="IPR036390">
    <property type="entry name" value="WH_DNA-bd_sf"/>
</dbReference>
<dbReference type="NCBIfam" id="NF011779">
    <property type="entry name" value="PRK15243.1"/>
    <property type="match status" value="1"/>
</dbReference>
<dbReference type="PANTHER" id="PTHR30579:SF7">
    <property type="entry name" value="HTH-TYPE TRANSCRIPTIONAL REGULATOR LRHA-RELATED"/>
    <property type="match status" value="1"/>
</dbReference>
<dbReference type="PANTHER" id="PTHR30579">
    <property type="entry name" value="TRANSCRIPTIONAL REGULATOR"/>
    <property type="match status" value="1"/>
</dbReference>
<dbReference type="Pfam" id="PF00126">
    <property type="entry name" value="HTH_1"/>
    <property type="match status" value="1"/>
</dbReference>
<dbReference type="SUPFAM" id="SSF46785">
    <property type="entry name" value="Winged helix' DNA-binding domain"/>
    <property type="match status" value="1"/>
</dbReference>
<dbReference type="PROSITE" id="PS50931">
    <property type="entry name" value="HTH_LYSR"/>
    <property type="match status" value="1"/>
</dbReference>
<gene>
    <name type="primary">mkaC</name>
    <name type="synonym">mkfC</name>
    <name type="synonym">spvR</name>
    <name type="synonym">vagA</name>
    <name type="ordered locus">PSLT041</name>
</gene>
<name>VRPR_SALTY</name>
<sequence length="297" mass="33836">MDFLINKKLKIFITLMETGSFSIATSVLYITRTPLSRVISDLERELKQRLFIRKNGTLIPTEFAQTIYRKVKSHYIFLHALEQEIGPTGKTKQLEIIFDEIYPGSLKNLIISALTISGQKTNIMGRAVNSQIIEELCQTNNCIVISARNYFHRESLVCRTSVEGGVMLFIPKKFFLCGKPDINRLAGTPVLFHEGAKNFNLDTIYHFFEQTLGITNPAFSFDNVDLFSSLYRLQQGLAMLLIPVRVCRALGLSTDHALHIKGVALCTSLYYPTKKRETPDYRKAIKLIQQELKQSTF</sequence>
<comment type="function">
    <text>Positive regulator for the plasmid-encoded virulence factors SpvA, SpvB, and SpvC.</text>
</comment>
<comment type="subcellular location">
    <subcellularLocation>
        <location>Cytoplasm</location>
    </subcellularLocation>
</comment>
<comment type="disruption phenotype">
    <text evidence="2">Decreases expression of genes encoding virulence proteins (PubMed:19229334). Decreases virulence in mouse (PubMed:19229334).</text>
</comment>
<comment type="similarity">
    <text evidence="4">Belongs to the LysR transcriptional regulatory family.</text>
</comment>
<proteinExistence type="evidence at protein level"/>